<name>ENV1_MOUSE</name>
<protein>
    <recommendedName>
        <fullName>MLV-related proviral Env polyprotein</fullName>
    </recommendedName>
    <component>
        <recommendedName>
            <fullName>Surface protein</fullName>
            <shortName>SU</shortName>
        </recommendedName>
    </component>
    <component>
        <recommendedName>
            <fullName>Transmembrane protein</fullName>
            <shortName>TM</shortName>
        </recommendedName>
    </component>
</protein>
<dbReference type="EMBL" id="AY219544">
    <property type="protein sequence ID" value="AAO37244.2"/>
    <property type="molecule type" value="Genomic_DNA"/>
</dbReference>
<dbReference type="EMBL" id="AY219545">
    <property type="protein sequence ID" value="AAO37246.2"/>
    <property type="molecule type" value="Genomic_DNA"/>
</dbReference>
<dbReference type="EMBL" id="AY219546">
    <property type="protein sequence ID" value="AAO37248.2"/>
    <property type="molecule type" value="Genomic_DNA"/>
</dbReference>
<dbReference type="EMBL" id="AY219547">
    <property type="protein sequence ID" value="AAO37250.2"/>
    <property type="molecule type" value="Genomic_DNA"/>
</dbReference>
<dbReference type="EMBL" id="AY219548">
    <property type="protein sequence ID" value="AAO37252.2"/>
    <property type="molecule type" value="Genomic_DNA"/>
</dbReference>
<dbReference type="EMBL" id="AY219550">
    <property type="protein sequence ID" value="AAO37255.2"/>
    <property type="molecule type" value="Genomic_DNA"/>
</dbReference>
<dbReference type="EMBL" id="AY219551">
    <property type="protein sequence ID" value="AAO37257.2"/>
    <property type="molecule type" value="Genomic_DNA"/>
</dbReference>
<dbReference type="EMBL" id="AY219554">
    <property type="protein sequence ID" value="AAO37261.2"/>
    <property type="molecule type" value="Genomic_DNA"/>
</dbReference>
<dbReference type="EMBL" id="AY219557">
    <property type="protein sequence ID" value="AAO37265.2"/>
    <property type="molecule type" value="Genomic_DNA"/>
</dbReference>
<dbReference type="EMBL" id="AY219558">
    <property type="protein sequence ID" value="AAO37267.2"/>
    <property type="molecule type" value="Genomic_DNA"/>
</dbReference>
<dbReference type="EMBL" id="AY219564">
    <property type="protein sequence ID" value="AAO37279.2"/>
    <property type="molecule type" value="Genomic_DNA"/>
</dbReference>
<dbReference type="EMBL" id="AY219566">
    <property type="protein sequence ID" value="AAO37283.2"/>
    <property type="molecule type" value="Genomic_DNA"/>
</dbReference>
<dbReference type="EMBL" id="AY219567">
    <property type="protein sequence ID" value="AAO37285.2"/>
    <property type="molecule type" value="Genomic_DNA"/>
</dbReference>
<dbReference type="EMBL" id="M11301">
    <property type="protein sequence ID" value="AAA37561.1"/>
    <property type="molecule type" value="mRNA"/>
</dbReference>
<dbReference type="PDB" id="4JGS">
    <property type="method" value="X-ray"/>
    <property type="resolution" value="2.20 A"/>
    <property type="chains" value="A/B/C/D/E/F/G/H/I=469-564"/>
</dbReference>
<dbReference type="PDBsum" id="4JGS"/>
<dbReference type="SMR" id="P10404"/>
<dbReference type="FunCoup" id="P10404">
    <property type="interactions" value="38"/>
</dbReference>
<dbReference type="IntAct" id="P10404">
    <property type="interactions" value="1"/>
</dbReference>
<dbReference type="GlyGen" id="P10404">
    <property type="glycosylation" value="7 sites, 5 N-linked glycans (5 sites), 1 O-linked glycan (1 site)"/>
</dbReference>
<dbReference type="SwissPalm" id="P10404"/>
<dbReference type="CPTAC" id="non-CPTAC-3575"/>
<dbReference type="jPOST" id="P10404"/>
<dbReference type="PeptideAtlas" id="P10404"/>
<dbReference type="Pumba" id="P10404"/>
<dbReference type="TopDownProteomics" id="P10404"/>
<dbReference type="InParanoid" id="P10404"/>
<dbReference type="PRO" id="PR:P10404"/>
<dbReference type="Proteomes" id="UP000000589">
    <property type="component" value="Unplaced"/>
</dbReference>
<dbReference type="RNAct" id="P10404">
    <property type="molecule type" value="protein"/>
</dbReference>
<dbReference type="GO" id="GO:0005886">
    <property type="term" value="C:plasma membrane"/>
    <property type="evidence" value="ECO:0007669"/>
    <property type="project" value="UniProtKB-SubCell"/>
</dbReference>
<dbReference type="GO" id="GO:0046872">
    <property type="term" value="F:metal ion binding"/>
    <property type="evidence" value="ECO:0007669"/>
    <property type="project" value="UniProtKB-KW"/>
</dbReference>
<dbReference type="CDD" id="cd09851">
    <property type="entry name" value="HTLV-1-like_HR1-HR2"/>
    <property type="match status" value="1"/>
</dbReference>
<dbReference type="Gene3D" id="1.10.287.210">
    <property type="match status" value="1"/>
</dbReference>
<dbReference type="Gene3D" id="3.90.310.10">
    <property type="entry name" value="ENV polyprotein, receptor-binding domain"/>
    <property type="match status" value="1"/>
</dbReference>
<dbReference type="InterPro" id="IPR008981">
    <property type="entry name" value="FMuLV_rcpt-bd"/>
</dbReference>
<dbReference type="InterPro" id="IPR018154">
    <property type="entry name" value="TLV/ENV_coat_polyprotein"/>
</dbReference>
<dbReference type="PANTHER" id="PTHR10424:SF72">
    <property type="entry name" value="BC035947 PROTEIN-RELATED"/>
    <property type="match status" value="1"/>
</dbReference>
<dbReference type="PANTHER" id="PTHR10424">
    <property type="entry name" value="VIRAL ENVELOPE PROTEIN"/>
    <property type="match status" value="1"/>
</dbReference>
<dbReference type="Pfam" id="PF00429">
    <property type="entry name" value="TLV_coat"/>
    <property type="match status" value="2"/>
</dbReference>
<dbReference type="SUPFAM" id="SSF49830">
    <property type="entry name" value="ENV polyprotein, receptor-binding domain"/>
    <property type="match status" value="1"/>
</dbReference>
<dbReference type="SUPFAM" id="SSF58069">
    <property type="entry name" value="Virus ectodomain"/>
    <property type="match status" value="1"/>
</dbReference>
<sequence length="641" mass="69613">MEGPAFSKPLKDKINPWGPLIVLGILIRAGVSVQHDSPHQVFNVTWRVTNLMTGQTANATSLLGTMTDAFPKLYFDLCDLIGDDWDETGLGCRTPGGRKRARTFDFYVCPGHTVPTGCGGPREGYCGKWGCETTGQAYWKPSSSWDLISLKRRNTPQNQGPCYDSSAVSSDIKGATPGGRCNPLVLEFTDAGKKASWDGPKVWGLRLYRSTGTDPVTRFSLTRQVLNIGPRVPIGPNPVITDQLPPSRPVQIMLPRPPQPPPPGAASIVPETAPPSQQPGTGDRLLNLVDGAYQALNLTSPDKTQECWLCLVAGPPYYEGVAVLGTYSNHTSAPANCSVASQHKLTLSEVTGQGLCVGAVPKTHQALCNTTQKTSDGSYYLAAPAGTIWACNTGLTPCLSTTVLDLTTDYCVLVELWPKVTYHSPGYVYGQFERKTKYKREPVSLTLALLLGGLTMGGIAAGVGTGTTALVATKQFEQLQAAIHTDLGALEKSVSALEKSLTSLSEVVLQNRRGLDLLFLKEGGLCAALKEECCFYADHTGVVRDSMAKLRERLNQRQKLFESGQGWFEGLFNRSPWFTTLISTIMGPLIILLLILLFGPCILNRLVQFVKDRISVVQALVLTQQYHQLKSIDPEEVESRE</sequence>
<feature type="signal peptide" evidence="2">
    <location>
        <begin position="1"/>
        <end position="32"/>
    </location>
</feature>
<feature type="chain" id="PRO_0000021186" description="Surface protein" evidence="1">
    <location>
        <begin position="33"/>
        <end position="440"/>
    </location>
</feature>
<feature type="chain" id="PRO_0000295257" description="Transmembrane protein" evidence="1">
    <location>
        <begin position="441"/>
        <end position="641"/>
    </location>
</feature>
<feature type="topological domain" description="Extracellular" evidence="2">
    <location>
        <begin position="33"/>
        <end position="581"/>
    </location>
</feature>
<feature type="transmembrane region" description="Helical" evidence="2">
    <location>
        <begin position="582"/>
        <end position="602"/>
    </location>
</feature>
<feature type="topological domain" description="Cytoplasmic" evidence="2">
    <location>
        <begin position="603"/>
        <end position="641"/>
    </location>
</feature>
<feature type="region of interest" description="Disordered" evidence="3">
    <location>
        <begin position="256"/>
        <end position="281"/>
    </location>
</feature>
<feature type="region of interest" description="Fusion peptide" evidence="1">
    <location>
        <begin position="443"/>
        <end position="463"/>
    </location>
</feature>
<feature type="region of interest" description="Immunosuppression" evidence="1">
    <location>
        <begin position="509"/>
        <end position="525"/>
    </location>
</feature>
<feature type="coiled-coil region" evidence="2">
    <location>
        <begin position="471"/>
        <end position="520"/>
    </location>
</feature>
<feature type="coiled-coil region" evidence="2">
    <location>
        <begin position="530"/>
        <end position="566"/>
    </location>
</feature>
<feature type="short sequence motif" description="CXXC" evidence="1">
    <location>
        <begin position="307"/>
        <end position="310"/>
    </location>
</feature>
<feature type="short sequence motif" description="CX6CC" evidence="1">
    <location>
        <begin position="526"/>
        <end position="534"/>
    </location>
</feature>
<feature type="short sequence motif" description="YXXL motif; contains endocytosis signal" evidence="1">
    <location>
        <begin position="626"/>
        <end position="629"/>
    </location>
</feature>
<feature type="site" description="Cleavage" evidence="1">
    <location>
        <begin position="440"/>
        <end position="441"/>
    </location>
</feature>
<feature type="lipid moiety-binding region" description="S-palmitoyl cysteine" evidence="1">
    <location>
        <position position="601"/>
    </location>
</feature>
<feature type="glycosylation site" description="N-linked (GlcNAc...) asparagine" evidence="2">
    <location>
        <position position="43"/>
    </location>
</feature>
<feature type="glycosylation site" description="N-linked (GlcNAc...) asparagine" evidence="2">
    <location>
        <position position="58"/>
    </location>
</feature>
<feature type="glycosylation site" description="N-linked (GlcNAc...) asparagine" evidence="2">
    <location>
        <position position="297"/>
    </location>
</feature>
<feature type="glycosylation site" description="N-linked (GlcNAc...) asparagine" evidence="2">
    <location>
        <position position="336"/>
    </location>
</feature>
<feature type="glycosylation site" description="N-linked (GlcNAc...) asparagine" evidence="2">
    <location>
        <position position="369"/>
    </location>
</feature>
<feature type="disulfide bond" evidence="1">
    <location>
        <begin position="109"/>
        <end position="126"/>
    </location>
</feature>
<feature type="disulfide bond" evidence="1">
    <location>
        <begin position="118"/>
        <end position="131"/>
    </location>
</feature>
<feature type="disulfide bond" description="Interchain (between SU and TM chains, or C-337 with C-558); in linked form" evidence="1">
    <location>
        <begin position="307"/>
        <end position="534"/>
    </location>
</feature>
<feature type="disulfide bond" evidence="1">
    <location>
        <begin position="307"/>
        <end position="310"/>
    </location>
</feature>
<feature type="disulfide bond" evidence="1">
    <location>
        <begin position="337"/>
        <end position="391"/>
    </location>
</feature>
<feature type="disulfide bond" evidence="1">
    <location>
        <begin position="356"/>
        <end position="368"/>
    </location>
</feature>
<feature type="disulfide bond" evidence="1">
    <location>
        <begin position="398"/>
        <end position="411"/>
    </location>
</feature>
<feature type="disulfide bond" evidence="1">
    <location>
        <begin position="526"/>
        <end position="533"/>
    </location>
</feature>
<feature type="sequence variant">
    <original>V</original>
    <variation>I</variation>
    <location>
        <position position="22"/>
    </location>
</feature>
<feature type="sequence variant">
    <original>G</original>
    <variation>R</variation>
    <location>
        <position position="24"/>
    </location>
</feature>
<feature type="sequence variant">
    <original>R</original>
    <variation>G</variation>
    <location>
        <position position="153"/>
    </location>
</feature>
<feature type="sequence variant">
    <original>Q</original>
    <variation>R</variation>
    <location>
        <position position="157"/>
    </location>
</feature>
<feature type="sequence variant">
    <original>I</original>
    <variation>T</variation>
    <location>
        <position position="268"/>
    </location>
</feature>
<feature type="sequence variant">
    <original>G</original>
    <variation>E</variation>
    <location>
        <position position="280"/>
    </location>
</feature>
<feature type="sequence variant">
    <original>V</original>
    <variation>A</variation>
    <location>
        <position position="339"/>
    </location>
</feature>
<feature type="sequence variant">
    <original>E</original>
    <variation>K</variation>
    <location>
        <position position="349"/>
    </location>
</feature>
<feature type="sequence variant">
    <original>G</original>
    <variation>R</variation>
    <location>
        <position position="358"/>
    </location>
</feature>
<feature type="sequence variant">
    <original>R</original>
    <variation>K</variation>
    <location>
        <position position="434"/>
    </location>
</feature>
<feature type="sequence variant">
    <original>G</original>
    <variation>D</variation>
    <location>
        <position position="458"/>
    </location>
</feature>
<feature type="sequence variant">
    <original>E</original>
    <variation>K</variation>
    <location>
        <position position="491"/>
    </location>
</feature>
<feature type="sequence variant">
    <original>G</original>
    <variation>R</variation>
    <location>
        <position position="514"/>
    </location>
</feature>
<feature type="sequence variant">
    <original>G</original>
    <variation>R</variation>
    <location>
        <position position="524"/>
    </location>
</feature>
<feature type="sequence variant">
    <original>E</original>
    <variation>K</variation>
    <location>
        <position position="531"/>
    </location>
</feature>
<feature type="sequence variant">
    <original>S</original>
    <variation>N</variation>
    <location>
        <position position="546"/>
    </location>
</feature>
<feature type="sequence variant">
    <original>A</original>
    <variation>T</variation>
    <location>
        <position position="548"/>
    </location>
</feature>
<feature type="sequence variant">
    <original>E</original>
    <variation>K</variation>
    <location>
        <position position="552"/>
    </location>
</feature>
<feature type="sequence variant">
    <original>E</original>
    <variation>K</variation>
    <location>
        <position position="636"/>
    </location>
</feature>
<feature type="helix" evidence="5">
    <location>
        <begin position="477"/>
        <end position="518"/>
    </location>
</feature>
<feature type="helix" evidence="5">
    <location>
        <begin position="520"/>
        <end position="522"/>
    </location>
</feature>
<feature type="helix" evidence="5">
    <location>
        <begin position="525"/>
        <end position="529"/>
    </location>
</feature>
<feature type="helix" evidence="5">
    <location>
        <begin position="540"/>
        <end position="556"/>
    </location>
</feature>
<organism>
    <name type="scientific">Mus musculus</name>
    <name type="common">Mouse</name>
    <dbReference type="NCBI Taxonomy" id="10090"/>
    <lineage>
        <taxon>Eukaryota</taxon>
        <taxon>Metazoa</taxon>
        <taxon>Chordata</taxon>
        <taxon>Craniata</taxon>
        <taxon>Vertebrata</taxon>
        <taxon>Euteleostomi</taxon>
        <taxon>Mammalia</taxon>
        <taxon>Eutheria</taxon>
        <taxon>Euarchontoglires</taxon>
        <taxon>Glires</taxon>
        <taxon>Rodentia</taxon>
        <taxon>Myomorpha</taxon>
        <taxon>Muroidea</taxon>
        <taxon>Muridae</taxon>
        <taxon>Murinae</taxon>
        <taxon>Mus</taxon>
        <taxon>Mus</taxon>
    </lineage>
</organism>
<reference key="1">
    <citation type="journal article" date="2003" name="J. Virol.">
        <title>Antigenic subclasses of polytropic murine leukemia virus (MLV) isolates reflect three distinct groups of endogenous polytropic MLV-related sequences in NFS/N mice.</title>
        <authorList>
            <person name="Evans L.H."/>
            <person name="Lavignon M."/>
            <person name="Taylor M."/>
            <person name="Alamgir A.S."/>
        </authorList>
    </citation>
    <scope>NUCLEOTIDE SEQUENCE [GENOMIC DNA]</scope>
    <source>
        <strain>NFS</strain>
    </source>
</reference>
<reference key="2">
    <citation type="journal article" date="1985" name="J. Virol.">
        <title>Normal expression of polymorphic endogenous retroviral RNA containing segments identical to mink cell focus-forming virus.</title>
        <authorList>
            <person name="Levy D.E."/>
            <person name="Lerner R.A."/>
            <person name="Wilson M.C."/>
        </authorList>
    </citation>
    <scope>NUCLEOTIDE SEQUENCE [MRNA] OF 1-313</scope>
    <source>
        <strain>129</strain>
    </source>
</reference>
<reference key="3">
    <citation type="journal article" date="2010" name="Cell">
        <title>A tissue-specific atlas of mouse protein phosphorylation and expression.</title>
        <authorList>
            <person name="Huttlin E.L."/>
            <person name="Jedrychowski M.P."/>
            <person name="Elias J.E."/>
            <person name="Goswami T."/>
            <person name="Rad R."/>
            <person name="Beausoleil S.A."/>
            <person name="Villen J."/>
            <person name="Haas W."/>
            <person name="Sowa M.E."/>
            <person name="Gygi S.P."/>
        </authorList>
    </citation>
    <scope>IDENTIFICATION BY MASS SPECTROMETRY [LARGE SCALE ANALYSIS]</scope>
    <source>
        <tissue>Liver</tissue>
        <tissue>Pancreas</tissue>
        <tissue>Spleen</tissue>
    </source>
</reference>
<evidence type="ECO:0000250" key="1"/>
<evidence type="ECO:0000255" key="2"/>
<evidence type="ECO:0000256" key="3">
    <source>
        <dbReference type="SAM" id="MobiDB-lite"/>
    </source>
</evidence>
<evidence type="ECO:0000305" key="4"/>
<evidence type="ECO:0007829" key="5">
    <source>
        <dbReference type="PDB" id="4JGS"/>
    </source>
</evidence>
<accession>P10404</accession>
<accession>Q78N71</accession>
<accession>Q78N73</accession>
<accession>Q78N94</accession>
<accession>Q80SW7</accession>
<accession>Q80SW8</accession>
<accession>Q80SY0</accession>
<accession>Q80SY1</accession>
<accession>Q811M9</accession>
<accession>Q811N4</accession>
<keyword id="KW-0002">3D-structure</keyword>
<keyword id="KW-1003">Cell membrane</keyword>
<keyword id="KW-0165">Cleavage on pair of basic residues</keyword>
<keyword id="KW-0175">Coiled coil</keyword>
<keyword id="KW-1015">Disulfide bond</keyword>
<keyword id="KW-0325">Glycoprotein</keyword>
<keyword id="KW-0449">Lipoprotein</keyword>
<keyword id="KW-0472">Membrane</keyword>
<keyword id="KW-0479">Metal-binding</keyword>
<keyword id="KW-0564">Palmitate</keyword>
<keyword id="KW-1185">Reference proteome</keyword>
<keyword id="KW-0732">Signal</keyword>
<keyword id="KW-0812">Transmembrane</keyword>
<keyword id="KW-1133">Transmembrane helix</keyword>
<keyword id="KW-0261">Viral envelope protein</keyword>
<keyword id="KW-0946">Virion</keyword>
<keyword id="KW-0862">Zinc</keyword>
<comment type="function">
    <text evidence="1">The surface protein (SU) attaches the virus to the host cell by binding to its receptor. This interaction triggers the refolding of the transmembrane protein (TM) and is thought to activate its fusogenic potential by unmasking its fusion peptide. Fusion occurs at the host cell plasma membrane (By similarity).</text>
</comment>
<comment type="function">
    <text evidence="1">The transmembrane protein (TM) acts as a class I viral fusion protein. Under the current model, the protein has at least 3 conformational states: pre-fusion native state, pre-hairpin intermediate state, and post-fusion hairpin state. During viral and target cell membrane fusion, the coiled coil regions (heptad repeats) assume a trimer-of-hairpins structure, positioning the fusion peptide in close proximity to the C-terminal region of the ectodomain. The formation of this structure appears to drive apposition and subsequent fusion of viral and target cell membranes. Membranes fusion leads to delivery of the nucleocapsid into the cytoplasm (By similarity).</text>
</comment>
<comment type="subunit">
    <text evidence="1">The mature envelope protein (Env) consists of a trimer of SU-TM heterodimers attached by a labile interchain disulfide bond.</text>
</comment>
<comment type="subcellular location">
    <molecule>Transmembrane protein</molecule>
    <subcellularLocation>
        <location>Virion membrane</location>
        <topology>Single-pass type I membrane protein</topology>
    </subcellularLocation>
    <subcellularLocation>
        <location>Cell membrane</location>
        <topology>Single-pass type I membrane protein</topology>
    </subcellularLocation>
    <text evidence="1">The surface protein is not anchored to the viral envelope, but associates with the extravirion surface through its binding to TM. Both proteins are thought to be concentrated at the site of budding and incorporated into the virions possibly by contacts between the cytoplasmic tail of Env and the N-terminus of Gag. R-peptide: Cell membrane; peripheral membrane protein. The R-peptide is membrane-associated through its palmitate (By similarity).</text>
</comment>
<comment type="subcellular location">
    <molecule>Surface protein</molecule>
    <subcellularLocation>
        <location>Virion membrane</location>
        <topology>Peripheral membrane protein</topology>
    </subcellularLocation>
    <subcellularLocation>
        <location>Cell membrane</location>
        <topology>Peripheral membrane protein</topology>
    </subcellularLocation>
    <text evidence="1">The surface protein is not anchored to the viral envelope, but associates with the extravirion surface through its binding to TM. Both proteins are thought to be concentrated at the site of budding and incorporated into the virions possibly by contacts between the cytoplasmic tail of Env and the N-terminus of Gag. R-peptide: Cell membrane; peripheral membrane protein. The R-peptide is membrane-associated through its palmitate (By similarity).</text>
</comment>
<comment type="domain">
    <text>The YXXL motif is involved in determining the exact site of viral release at the surface of infected mononuclear cells and promotes endocytosis.</text>
</comment>
<comment type="domain">
    <text evidence="1">The 17 amino acids long immunosuppressive region is present in many retroviral envelope proteins. Synthetic peptides derived from this relatively conserved sequence inhibit immune function in vitro and in vivo (By similarity).</text>
</comment>
<comment type="PTM">
    <text evidence="1">Specific enzymatic cleavages in vivo yield mature proteins. Envelope glycoproteins are synthesized as an inactive precursor that is N-glycosylated and processed likely by host cell furin or by a furin-like protease in the Golgi to yield the mature SU and TM proteins. The cleavage site between SU and TM requires the minimal sequence [KR]-X-[KR]-R. The R-peptide is released from the C-terminus of the cytoplasmic tail of the TM protein upon particle formation as a result of proteolytic cleavage by the viral protease. Cleavage of this peptide is required for TM to become fusogenic (By similarity).</text>
</comment>
<comment type="PTM">
    <text evidence="1">The CXXC motif is highly conserved across a broad range of retroviral envelope proteins. It is thought to participate in the formation of a labile disulfide bond possibly with the CX6CC motif present in the transmembrane protein. Isomerization of the intersubunit disulfide bond to an SU intrachain disulfide bond is thought to occur upon receptor recognition in order to allow membrane fusion (By similarity).</text>
</comment>
<comment type="PTM">
    <text evidence="1">The transmembrane protein is palmitoylated.</text>
</comment>
<comment type="PTM">
    <text evidence="1">The R-peptide is palmitoylated.</text>
</comment>
<comment type="caution">
    <text evidence="4">This polyprotein is encoded by an endogenous retrovirus expressed in some mouse strains. Multiple sequences are present in different regions of the genome, probably reflecting the different sites of integration of the exogenous retrovirus.</text>
</comment>
<proteinExistence type="evidence at protein level"/>